<sequence length="209" mass="24158">MGRGKIEIKRIENSTNRQVTFSKRRSGILKKAREISVLCDAEVGVVIFSSAGKLYDYCSPKTSLSRILEKYQTNSGKILWDEKHKSLSAEIDRIKKENDNMQIELRHLKGEDLNSLQPKELIMIEEALDNGIVNVNDKLMDHWERHVRTDKMLEDENKLLAFKLHQQDIALSGSMRDLELGYHPDRDFAAQMPITFRVQPSHPNLQENN</sequence>
<gene>
    <name type="primary">MADS2</name>
    <name type="synonym">MADS</name>
    <name type="ordered locus">Os01g0883100</name>
    <name type="ordered locus">LOC_Os01g66030</name>
    <name type="ORF">B1065E10.30</name>
    <name evidence="8" type="ORF">OsJ_04312</name>
</gene>
<protein>
    <recommendedName>
        <fullName>MADS-box transcription factor 2</fullName>
    </recommendedName>
    <alternativeName>
        <fullName>NMADS1</fullName>
    </alternativeName>
    <alternativeName>
        <fullName>OsMADS2</fullName>
    </alternativeName>
    <alternativeName>
        <fullName>RMADS219</fullName>
    </alternativeName>
</protein>
<reference key="1">
    <citation type="journal article" date="1995" name="Plant Sci.">
        <title>Characterization of two rice MADS box genes homologous to GLOBOSA.</title>
        <authorList>
            <person name="Chung Y.-Y."/>
            <person name="Kim S.-R."/>
            <person name="Kang H.-G."/>
            <person name="Noh Y.-S."/>
            <person name="Park M.C."/>
            <person name="Finkel D."/>
            <person name="An G."/>
        </authorList>
    </citation>
    <scope>NUCLEOTIDE SEQUENCE [MRNA] (ISOFORM 1)</scope>
    <scope>TISSUE SPECIFICITY</scope>
    <scope>DEVELOPMENTAL STAGE</scope>
    <source>
        <tissue>Immature flower</tissue>
    </source>
</reference>
<reference key="2">
    <citation type="submission" date="2000-04" db="EMBL/GenBank/DDBJ databases">
        <title>Molecular cloning of MADS gene in rice.</title>
        <authorList>
            <person name="Yoon U.-H."/>
            <person name="Hahn J.-H."/>
            <person name="Eun M.-Y."/>
        </authorList>
    </citation>
    <scope>NUCLEOTIDE SEQUENCE [GENOMIC DNA]</scope>
</reference>
<reference key="3">
    <citation type="submission" date="2004-02" db="EMBL/GenBank/DDBJ databases">
        <authorList>
            <person name="Yao Q."/>
            <person name="Peng R."/>
            <person name="Xiong A."/>
        </authorList>
    </citation>
    <scope>NUCLEOTIDE SEQUENCE [MRNA] (ISOFORM 1)</scope>
</reference>
<reference key="4">
    <citation type="journal article" date="2002" name="Nature">
        <title>The genome sequence and structure of rice chromosome 1.</title>
        <authorList>
            <person name="Sasaki T."/>
            <person name="Matsumoto T."/>
            <person name="Yamamoto K."/>
            <person name="Sakata K."/>
            <person name="Baba T."/>
            <person name="Katayose Y."/>
            <person name="Wu J."/>
            <person name="Niimura Y."/>
            <person name="Cheng Z."/>
            <person name="Nagamura Y."/>
            <person name="Antonio B.A."/>
            <person name="Kanamori H."/>
            <person name="Hosokawa S."/>
            <person name="Masukawa M."/>
            <person name="Arikawa K."/>
            <person name="Chiden Y."/>
            <person name="Hayashi M."/>
            <person name="Okamoto M."/>
            <person name="Ando T."/>
            <person name="Aoki H."/>
            <person name="Arita K."/>
            <person name="Hamada M."/>
            <person name="Harada C."/>
            <person name="Hijishita S."/>
            <person name="Honda M."/>
            <person name="Ichikawa Y."/>
            <person name="Idonuma A."/>
            <person name="Iijima M."/>
            <person name="Ikeda M."/>
            <person name="Ikeno M."/>
            <person name="Ito S."/>
            <person name="Ito T."/>
            <person name="Ito Y."/>
            <person name="Ito Y."/>
            <person name="Iwabuchi A."/>
            <person name="Kamiya K."/>
            <person name="Karasawa W."/>
            <person name="Katagiri S."/>
            <person name="Kikuta A."/>
            <person name="Kobayashi N."/>
            <person name="Kono I."/>
            <person name="Machita K."/>
            <person name="Maehara T."/>
            <person name="Mizuno H."/>
            <person name="Mizubayashi T."/>
            <person name="Mukai Y."/>
            <person name="Nagasaki H."/>
            <person name="Nakashima M."/>
            <person name="Nakama Y."/>
            <person name="Nakamichi Y."/>
            <person name="Nakamura M."/>
            <person name="Namiki N."/>
            <person name="Negishi M."/>
            <person name="Ohta I."/>
            <person name="Ono N."/>
            <person name="Saji S."/>
            <person name="Sakai K."/>
            <person name="Shibata M."/>
            <person name="Shimokawa T."/>
            <person name="Shomura A."/>
            <person name="Song J."/>
            <person name="Takazaki Y."/>
            <person name="Terasawa K."/>
            <person name="Tsuji K."/>
            <person name="Waki K."/>
            <person name="Yamagata H."/>
            <person name="Yamane H."/>
            <person name="Yoshiki S."/>
            <person name="Yoshihara R."/>
            <person name="Yukawa K."/>
            <person name="Zhong H."/>
            <person name="Iwama H."/>
            <person name="Endo T."/>
            <person name="Ito H."/>
            <person name="Hahn J.H."/>
            <person name="Kim H.-I."/>
            <person name="Eun M.-Y."/>
            <person name="Yano M."/>
            <person name="Jiang J."/>
            <person name="Gojobori T."/>
        </authorList>
    </citation>
    <scope>NUCLEOTIDE SEQUENCE [LARGE SCALE GENOMIC DNA]</scope>
    <source>
        <strain>cv. Nipponbare</strain>
    </source>
</reference>
<reference key="5">
    <citation type="journal article" date="2005" name="Nature">
        <title>The map-based sequence of the rice genome.</title>
        <authorList>
            <consortium name="International rice genome sequencing project (IRGSP)"/>
        </authorList>
    </citation>
    <scope>NUCLEOTIDE SEQUENCE [LARGE SCALE GENOMIC DNA]</scope>
    <source>
        <strain>cv. Nipponbare</strain>
    </source>
</reference>
<reference key="6">
    <citation type="journal article" date="2008" name="Nucleic Acids Res.">
        <title>The rice annotation project database (RAP-DB): 2008 update.</title>
        <authorList>
            <consortium name="The rice annotation project (RAP)"/>
        </authorList>
    </citation>
    <scope>GENOME REANNOTATION</scope>
    <source>
        <strain>cv. Nipponbare</strain>
    </source>
</reference>
<reference key="7">
    <citation type="journal article" date="2013" name="Rice">
        <title>Improvement of the Oryza sativa Nipponbare reference genome using next generation sequence and optical map data.</title>
        <authorList>
            <person name="Kawahara Y."/>
            <person name="de la Bastide M."/>
            <person name="Hamilton J.P."/>
            <person name="Kanamori H."/>
            <person name="McCombie W.R."/>
            <person name="Ouyang S."/>
            <person name="Schwartz D.C."/>
            <person name="Tanaka T."/>
            <person name="Wu J."/>
            <person name="Zhou S."/>
            <person name="Childs K.L."/>
            <person name="Davidson R.M."/>
            <person name="Lin H."/>
            <person name="Quesada-Ocampo L."/>
            <person name="Vaillancourt B."/>
            <person name="Sakai H."/>
            <person name="Lee S.S."/>
            <person name="Kim J."/>
            <person name="Numa H."/>
            <person name="Itoh T."/>
            <person name="Buell C.R."/>
            <person name="Matsumoto T."/>
        </authorList>
    </citation>
    <scope>GENOME REANNOTATION</scope>
    <source>
        <strain>cv. Nipponbare</strain>
    </source>
</reference>
<reference key="8">
    <citation type="journal article" date="2005" name="PLoS Biol.">
        <title>The genomes of Oryza sativa: a history of duplications.</title>
        <authorList>
            <person name="Yu J."/>
            <person name="Wang J."/>
            <person name="Lin W."/>
            <person name="Li S."/>
            <person name="Li H."/>
            <person name="Zhou J."/>
            <person name="Ni P."/>
            <person name="Dong W."/>
            <person name="Hu S."/>
            <person name="Zeng C."/>
            <person name="Zhang J."/>
            <person name="Zhang Y."/>
            <person name="Li R."/>
            <person name="Xu Z."/>
            <person name="Li S."/>
            <person name="Li X."/>
            <person name="Zheng H."/>
            <person name="Cong L."/>
            <person name="Lin L."/>
            <person name="Yin J."/>
            <person name="Geng J."/>
            <person name="Li G."/>
            <person name="Shi J."/>
            <person name="Liu J."/>
            <person name="Lv H."/>
            <person name="Li J."/>
            <person name="Wang J."/>
            <person name="Deng Y."/>
            <person name="Ran L."/>
            <person name="Shi X."/>
            <person name="Wang X."/>
            <person name="Wu Q."/>
            <person name="Li C."/>
            <person name="Ren X."/>
            <person name="Wang J."/>
            <person name="Wang X."/>
            <person name="Li D."/>
            <person name="Liu D."/>
            <person name="Zhang X."/>
            <person name="Ji Z."/>
            <person name="Zhao W."/>
            <person name="Sun Y."/>
            <person name="Zhang Z."/>
            <person name="Bao J."/>
            <person name="Han Y."/>
            <person name="Dong L."/>
            <person name="Ji J."/>
            <person name="Chen P."/>
            <person name="Wu S."/>
            <person name="Liu J."/>
            <person name="Xiao Y."/>
            <person name="Bu D."/>
            <person name="Tan J."/>
            <person name="Yang L."/>
            <person name="Ye C."/>
            <person name="Zhang J."/>
            <person name="Xu J."/>
            <person name="Zhou Y."/>
            <person name="Yu Y."/>
            <person name="Zhang B."/>
            <person name="Zhuang S."/>
            <person name="Wei H."/>
            <person name="Liu B."/>
            <person name="Lei M."/>
            <person name="Yu H."/>
            <person name="Li Y."/>
            <person name="Xu H."/>
            <person name="Wei S."/>
            <person name="He X."/>
            <person name="Fang L."/>
            <person name="Zhang Z."/>
            <person name="Zhang Y."/>
            <person name="Huang X."/>
            <person name="Su Z."/>
            <person name="Tong W."/>
            <person name="Li J."/>
            <person name="Tong Z."/>
            <person name="Li S."/>
            <person name="Ye J."/>
            <person name="Wang L."/>
            <person name="Fang L."/>
            <person name="Lei T."/>
            <person name="Chen C.-S."/>
            <person name="Chen H.-C."/>
            <person name="Xu Z."/>
            <person name="Li H."/>
            <person name="Huang H."/>
            <person name="Zhang F."/>
            <person name="Xu H."/>
            <person name="Li N."/>
            <person name="Zhao C."/>
            <person name="Li S."/>
            <person name="Dong L."/>
            <person name="Huang Y."/>
            <person name="Li L."/>
            <person name="Xi Y."/>
            <person name="Qi Q."/>
            <person name="Li W."/>
            <person name="Zhang B."/>
            <person name="Hu W."/>
            <person name="Zhang Y."/>
            <person name="Tian X."/>
            <person name="Jiao Y."/>
            <person name="Liang X."/>
            <person name="Jin J."/>
            <person name="Gao L."/>
            <person name="Zheng W."/>
            <person name="Hao B."/>
            <person name="Liu S.-M."/>
            <person name="Wang W."/>
            <person name="Yuan L."/>
            <person name="Cao M."/>
            <person name="McDermott J."/>
            <person name="Samudrala R."/>
            <person name="Wang J."/>
            <person name="Wong G.K.-S."/>
            <person name="Yang H."/>
        </authorList>
    </citation>
    <scope>NUCLEOTIDE SEQUENCE [LARGE SCALE GENOMIC DNA]</scope>
    <source>
        <strain>cv. Nipponbare</strain>
    </source>
</reference>
<reference key="9">
    <citation type="journal article" date="2003" name="Science">
        <title>Collection, mapping, and annotation of over 28,000 cDNA clones from japonica rice.</title>
        <authorList>
            <consortium name="The rice full-length cDNA consortium"/>
        </authorList>
    </citation>
    <scope>NUCLEOTIDE SEQUENCE [LARGE SCALE MRNA]</scope>
    <source>
        <strain>cv. Nipponbare</strain>
    </source>
</reference>
<reference key="10">
    <citation type="journal article" date="2000" name="Prog. Nat. Sci.">
        <title>Cloning and characterization of two cDNAs encoding rice MADS box protein.</title>
        <authorList>
            <person name="Yuan Z."/>
            <person name="Qian X."/>
            <person name="Liu J."/>
            <person name="Liu J."/>
            <person name="Qian M."/>
            <person name="Yang J."/>
        </authorList>
    </citation>
    <scope>NUCLEOTIDE SEQUENCE [MRNA] OF 8-164 (ISOFORM 2)</scope>
</reference>
<reference key="11">
    <citation type="journal article" date="2000" name="Plant Cell Physiol.">
        <title>Spatially and temporally regulated expression of rice MADS box genes with similarity to Arabidopsis class A, B and C genes.</title>
        <authorList>
            <person name="Kyozuka J."/>
            <person name="Kobayashi T."/>
            <person name="Morita M."/>
            <person name="Shimamoto K."/>
        </authorList>
    </citation>
    <scope>DEVELOPMENTAL STAGE</scope>
</reference>
<reference key="12">
    <citation type="journal article" date="2003" name="Genetics">
        <title>Double-stranded RNA interference of a rice PI/GLO paralog, OsMADS2, uncovers its second-whorl-specific function in floral organ patterning.</title>
        <authorList>
            <person name="Prasad K."/>
            <person name="Vijayraghavan U."/>
        </authorList>
    </citation>
    <scope>FUNCTION</scope>
</reference>
<comment type="function">
    <text evidence="4">Probable transcription factor involved in the development of floral organs. B-class protein required for normal development of lodicules (whorl 2).</text>
</comment>
<comment type="subcellular location">
    <subcellularLocation>
        <location evidence="7">Nucleus</location>
    </subcellularLocation>
</comment>
<comment type="alternative products">
    <event type="alternative splicing"/>
    <isoform>
        <id>Q40702-1</id>
        <name>1</name>
        <sequence type="displayed"/>
    </isoform>
    <isoform>
        <id>Q40702-2</id>
        <name>2</name>
        <sequence type="described" ref="VSP_015392 VSP_015393"/>
    </isoform>
</comment>
<comment type="tissue specificity">
    <text evidence="5">Highly expressed in anthers and carpels. Expressed in pollen, tapetum and stigma.</text>
</comment>
<comment type="developmental stage">
    <text evidence="3 5">Expressed in lodicules and stamens from early to late stage of flower development.</text>
</comment>
<evidence type="ECO:0000255" key="1">
    <source>
        <dbReference type="PROSITE-ProRule" id="PRU00251"/>
    </source>
</evidence>
<evidence type="ECO:0000255" key="2">
    <source>
        <dbReference type="PROSITE-ProRule" id="PRU00629"/>
    </source>
</evidence>
<evidence type="ECO:0000269" key="3">
    <source>
    </source>
</evidence>
<evidence type="ECO:0000269" key="4">
    <source>
    </source>
</evidence>
<evidence type="ECO:0000269" key="5">
    <source ref="1"/>
</evidence>
<evidence type="ECO:0000303" key="6">
    <source ref="10"/>
</evidence>
<evidence type="ECO:0000305" key="7"/>
<evidence type="ECO:0000312" key="8">
    <source>
        <dbReference type="EMBL" id="EEE55765.1"/>
    </source>
</evidence>
<proteinExistence type="evidence at transcript level"/>
<dbReference type="EMBL" id="L37526">
    <property type="protein sequence ID" value="AAB52709.1"/>
    <property type="molecule type" value="mRNA"/>
</dbReference>
<dbReference type="EMBL" id="AF254557">
    <property type="protein sequence ID" value="AAK17066.1"/>
    <property type="molecule type" value="Genomic_DNA"/>
</dbReference>
<dbReference type="EMBL" id="AY551924">
    <property type="protein sequence ID" value="AAS59830.1"/>
    <property type="molecule type" value="mRNA"/>
</dbReference>
<dbReference type="EMBL" id="AP003561">
    <property type="protein sequence ID" value="BAB90370.1"/>
    <property type="molecule type" value="Genomic_DNA"/>
</dbReference>
<dbReference type="EMBL" id="AP008207">
    <property type="protein sequence ID" value="BAF06926.1"/>
    <property type="molecule type" value="Genomic_DNA"/>
</dbReference>
<dbReference type="EMBL" id="AP014957">
    <property type="protein sequence ID" value="BAS75578.1"/>
    <property type="molecule type" value="Genomic_DNA"/>
</dbReference>
<dbReference type="EMBL" id="CM000138">
    <property type="protein sequence ID" value="EEE55765.1"/>
    <property type="molecule type" value="Genomic_DNA"/>
</dbReference>
<dbReference type="EMBL" id="AK070894">
    <property type="protein sequence ID" value="BAG92196.1"/>
    <property type="molecule type" value="mRNA"/>
</dbReference>
<dbReference type="EMBL" id="AF095645">
    <property type="protein sequence ID" value="AAK26240.1"/>
    <property type="molecule type" value="mRNA"/>
</dbReference>
<dbReference type="PIR" id="T03894">
    <property type="entry name" value="T03894"/>
</dbReference>
<dbReference type="RefSeq" id="XP_015623988.1">
    <property type="nucleotide sequence ID" value="XM_015768502.1"/>
</dbReference>
<dbReference type="SMR" id="Q40702"/>
<dbReference type="FunCoup" id="Q40702">
    <property type="interactions" value="34"/>
</dbReference>
<dbReference type="IntAct" id="Q40702">
    <property type="interactions" value="1"/>
</dbReference>
<dbReference type="STRING" id="39947.Q40702"/>
<dbReference type="PaxDb" id="39947-Q40702"/>
<dbReference type="EnsemblPlants" id="Os01t0883100-01">
    <molecule id="Q40702-1"/>
    <property type="protein sequence ID" value="Os01t0883100-01"/>
    <property type="gene ID" value="Os01g0883100"/>
</dbReference>
<dbReference type="Gramene" id="Os01t0883100-01">
    <molecule id="Q40702-1"/>
    <property type="protein sequence ID" value="Os01t0883100-01"/>
    <property type="gene ID" value="Os01g0883100"/>
</dbReference>
<dbReference type="KEGG" id="dosa:Os01g0883100"/>
<dbReference type="eggNOG" id="KOG0014">
    <property type="taxonomic scope" value="Eukaryota"/>
</dbReference>
<dbReference type="HOGENOM" id="CLU_053053_0_4_1"/>
<dbReference type="InParanoid" id="Q40702"/>
<dbReference type="OMA" id="GMMMRDQ"/>
<dbReference type="OrthoDB" id="1898716at2759"/>
<dbReference type="PlantReactome" id="R-OSA-9609102">
    <property type="pathway name" value="Flower development"/>
</dbReference>
<dbReference type="Proteomes" id="UP000000763">
    <property type="component" value="Chromosome 1"/>
</dbReference>
<dbReference type="Proteomes" id="UP000007752">
    <property type="component" value="Chromosome 1"/>
</dbReference>
<dbReference type="Proteomes" id="UP000059680">
    <property type="component" value="Chromosome 1"/>
</dbReference>
<dbReference type="GO" id="GO:0005634">
    <property type="term" value="C:nucleus"/>
    <property type="evidence" value="ECO:0007669"/>
    <property type="project" value="UniProtKB-SubCell"/>
</dbReference>
<dbReference type="GO" id="GO:0000981">
    <property type="term" value="F:DNA-binding transcription factor activity, RNA polymerase II-specific"/>
    <property type="evidence" value="ECO:0000318"/>
    <property type="project" value="GO_Central"/>
</dbReference>
<dbReference type="GO" id="GO:0046983">
    <property type="term" value="F:protein dimerization activity"/>
    <property type="evidence" value="ECO:0007669"/>
    <property type="project" value="InterPro"/>
</dbReference>
<dbReference type="GO" id="GO:0000978">
    <property type="term" value="F:RNA polymerase II cis-regulatory region sequence-specific DNA binding"/>
    <property type="evidence" value="ECO:0000318"/>
    <property type="project" value="GO_Central"/>
</dbReference>
<dbReference type="GO" id="GO:0030154">
    <property type="term" value="P:cell differentiation"/>
    <property type="evidence" value="ECO:0007669"/>
    <property type="project" value="UniProtKB-KW"/>
</dbReference>
<dbReference type="GO" id="GO:0045944">
    <property type="term" value="P:positive regulation of transcription by RNA polymerase II"/>
    <property type="evidence" value="ECO:0007669"/>
    <property type="project" value="InterPro"/>
</dbReference>
<dbReference type="GO" id="GO:0006357">
    <property type="term" value="P:regulation of transcription by RNA polymerase II"/>
    <property type="evidence" value="ECO:0000318"/>
    <property type="project" value="GO_Central"/>
</dbReference>
<dbReference type="GO" id="GO:0010097">
    <property type="term" value="P:specification of stamen identity"/>
    <property type="evidence" value="ECO:0000304"/>
    <property type="project" value="AgBase"/>
</dbReference>
<dbReference type="CDD" id="cd00265">
    <property type="entry name" value="MADS_MEF2_like"/>
    <property type="match status" value="1"/>
</dbReference>
<dbReference type="FunFam" id="3.40.1810.10:FF:000017">
    <property type="entry name" value="PISTILLATA-like MADS-box transcription factor"/>
    <property type="match status" value="1"/>
</dbReference>
<dbReference type="Gene3D" id="3.40.1810.10">
    <property type="entry name" value="Transcription factor, MADS-box"/>
    <property type="match status" value="1"/>
</dbReference>
<dbReference type="InterPro" id="IPR050142">
    <property type="entry name" value="MADS-box/MEF2_TF"/>
</dbReference>
<dbReference type="InterPro" id="IPR033896">
    <property type="entry name" value="MEF2-like_N"/>
</dbReference>
<dbReference type="InterPro" id="IPR002487">
    <property type="entry name" value="TF_Kbox"/>
</dbReference>
<dbReference type="InterPro" id="IPR002100">
    <property type="entry name" value="TF_MADSbox"/>
</dbReference>
<dbReference type="InterPro" id="IPR036879">
    <property type="entry name" value="TF_MADSbox_sf"/>
</dbReference>
<dbReference type="PANTHER" id="PTHR48019">
    <property type="entry name" value="SERUM RESPONSE FACTOR HOMOLOG"/>
    <property type="match status" value="1"/>
</dbReference>
<dbReference type="Pfam" id="PF01486">
    <property type="entry name" value="K-box"/>
    <property type="match status" value="1"/>
</dbReference>
<dbReference type="Pfam" id="PF00319">
    <property type="entry name" value="SRF-TF"/>
    <property type="match status" value="1"/>
</dbReference>
<dbReference type="PRINTS" id="PR00404">
    <property type="entry name" value="MADSDOMAIN"/>
</dbReference>
<dbReference type="SMART" id="SM00432">
    <property type="entry name" value="MADS"/>
    <property type="match status" value="1"/>
</dbReference>
<dbReference type="SUPFAM" id="SSF55455">
    <property type="entry name" value="SRF-like"/>
    <property type="match status" value="1"/>
</dbReference>
<dbReference type="PROSITE" id="PS51297">
    <property type="entry name" value="K_BOX"/>
    <property type="match status" value="1"/>
</dbReference>
<dbReference type="PROSITE" id="PS00350">
    <property type="entry name" value="MADS_BOX_1"/>
    <property type="match status" value="1"/>
</dbReference>
<dbReference type="PROSITE" id="PS50066">
    <property type="entry name" value="MADS_BOX_2"/>
    <property type="match status" value="1"/>
</dbReference>
<keyword id="KW-0010">Activator</keyword>
<keyword id="KW-0025">Alternative splicing</keyword>
<keyword id="KW-0217">Developmental protein</keyword>
<keyword id="KW-0221">Differentiation</keyword>
<keyword id="KW-0238">DNA-binding</keyword>
<keyword id="KW-0287">Flowering</keyword>
<keyword id="KW-0539">Nucleus</keyword>
<keyword id="KW-1185">Reference proteome</keyword>
<keyword id="KW-0804">Transcription</keyword>
<keyword id="KW-0805">Transcription regulation</keyword>
<accession>Q40702</accession>
<accession>Q0JH52</accession>
<accession>Q6Q9H8</accession>
<accession>Q7F2L5</accession>
<accession>Q9AUJ1</accession>
<organism>
    <name type="scientific">Oryza sativa subsp. japonica</name>
    <name type="common">Rice</name>
    <dbReference type="NCBI Taxonomy" id="39947"/>
    <lineage>
        <taxon>Eukaryota</taxon>
        <taxon>Viridiplantae</taxon>
        <taxon>Streptophyta</taxon>
        <taxon>Embryophyta</taxon>
        <taxon>Tracheophyta</taxon>
        <taxon>Spermatophyta</taxon>
        <taxon>Magnoliopsida</taxon>
        <taxon>Liliopsida</taxon>
        <taxon>Poales</taxon>
        <taxon>Poaceae</taxon>
        <taxon>BOP clade</taxon>
        <taxon>Oryzoideae</taxon>
        <taxon>Oryzeae</taxon>
        <taxon>Oryzinae</taxon>
        <taxon>Oryza</taxon>
        <taxon>Oryza sativa</taxon>
    </lineage>
</organism>
<name>MADS2_ORYSJ</name>
<feature type="chain" id="PRO_0000199499" description="MADS-box transcription factor 2">
    <location>
        <begin position="1"/>
        <end position="209"/>
    </location>
</feature>
<feature type="domain" description="MADS-box" evidence="1">
    <location>
        <begin position="1"/>
        <end position="61"/>
    </location>
</feature>
<feature type="domain" description="K-box" evidence="2">
    <location>
        <begin position="84"/>
        <end position="170"/>
    </location>
</feature>
<feature type="splice variant" id="VSP_015392" description="In isoform 2." evidence="6">
    <original>HVRTDKMLEDENKLLAFKL</original>
    <variation>IRCWKTRTSCWLSNCTSKI</variation>
    <location>
        <begin position="146"/>
        <end position="164"/>
    </location>
</feature>
<feature type="splice variant" id="VSP_015393" description="In isoform 2." evidence="6">
    <location>
        <begin position="165"/>
        <end position="209"/>
    </location>
</feature>
<feature type="sequence conflict" description="In Ref. 3; AAS59830." evidence="7" ref="3">
    <original>M</original>
    <variation>MM</variation>
    <location>
        <position position="1"/>
    </location>
</feature>
<feature type="sequence conflict" description="In Ref. 10; AAK26240." evidence="7" ref="10">
    <original>R</original>
    <variation>S</variation>
    <location>
        <position position="10"/>
    </location>
</feature>